<name>DLGD_CITK8</name>
<gene>
    <name evidence="1" type="primary">dlgD</name>
    <name type="ordered locus">CKO_05033</name>
</gene>
<accession>A8ARG3</accession>
<keyword id="KW-0963">Cytoplasm</keyword>
<keyword id="KW-0520">NAD</keyword>
<keyword id="KW-0560">Oxidoreductase</keyword>
<keyword id="KW-1185">Reference proteome</keyword>
<proteinExistence type="inferred from homology"/>
<comment type="function">
    <text evidence="1">Catalyzes the reduction of 2,3-diketo-L-gulonate in the presence of NADH, to form 3-keto-L-gulonate.</text>
</comment>
<comment type="catalytic activity">
    <reaction evidence="1">
        <text>3-dehydro-L-gulonate + NAD(+) = 2,3-dioxo-L-gulonate + NADH + H(+)</text>
        <dbReference type="Rhea" id="RHEA:21924"/>
        <dbReference type="ChEBI" id="CHEBI:15378"/>
        <dbReference type="ChEBI" id="CHEBI:57441"/>
        <dbReference type="ChEBI" id="CHEBI:57540"/>
        <dbReference type="ChEBI" id="CHEBI:57655"/>
        <dbReference type="ChEBI" id="CHEBI:57945"/>
        <dbReference type="EC" id="1.1.1.130"/>
    </reaction>
</comment>
<comment type="catalytic activity">
    <reaction evidence="1">
        <text>3-dehydro-L-gulonate + NADP(+) = 2,3-dioxo-L-gulonate + NADPH + H(+)</text>
        <dbReference type="Rhea" id="RHEA:21928"/>
        <dbReference type="ChEBI" id="CHEBI:15378"/>
        <dbReference type="ChEBI" id="CHEBI:57441"/>
        <dbReference type="ChEBI" id="CHEBI:57655"/>
        <dbReference type="ChEBI" id="CHEBI:57783"/>
        <dbReference type="ChEBI" id="CHEBI:58349"/>
        <dbReference type="EC" id="1.1.1.130"/>
    </reaction>
</comment>
<comment type="subunit">
    <text evidence="1">Homodimer.</text>
</comment>
<comment type="subcellular location">
    <subcellularLocation>
        <location evidence="1">Cytoplasm</location>
    </subcellularLocation>
</comment>
<comment type="similarity">
    <text evidence="1">Belongs to the LDH2/MDH2 oxidoreductase family. DlgD subfamily.</text>
</comment>
<organism>
    <name type="scientific">Citrobacter koseri (strain ATCC BAA-895 / CDC 4225-83 / SGSC4696)</name>
    <dbReference type="NCBI Taxonomy" id="290338"/>
    <lineage>
        <taxon>Bacteria</taxon>
        <taxon>Pseudomonadati</taxon>
        <taxon>Pseudomonadota</taxon>
        <taxon>Gammaproteobacteria</taxon>
        <taxon>Enterobacterales</taxon>
        <taxon>Enterobacteriaceae</taxon>
        <taxon>Citrobacter</taxon>
    </lineage>
</organism>
<protein>
    <recommendedName>
        <fullName evidence="1">2,3-diketo-L-gulonate reductase</fullName>
        <shortName evidence="1">2,3-DKG reductase</shortName>
        <ecNumber evidence="1">1.1.1.130</ecNumber>
    </recommendedName>
    <alternativeName>
        <fullName evidence="1">3-dehydro-L-gulonate 2-dehydrogenase</fullName>
    </alternativeName>
</protein>
<reference key="1">
    <citation type="submission" date="2007-08" db="EMBL/GenBank/DDBJ databases">
        <authorList>
            <consortium name="The Citrobacter koseri Genome Sequencing Project"/>
            <person name="McClelland M."/>
            <person name="Sanderson E.K."/>
            <person name="Porwollik S."/>
            <person name="Spieth J."/>
            <person name="Clifton W.S."/>
            <person name="Latreille P."/>
            <person name="Courtney L."/>
            <person name="Wang C."/>
            <person name="Pepin K."/>
            <person name="Bhonagiri V."/>
            <person name="Nash W."/>
            <person name="Johnson M."/>
            <person name="Thiruvilangam P."/>
            <person name="Wilson R."/>
        </authorList>
    </citation>
    <scope>NUCLEOTIDE SEQUENCE [LARGE SCALE GENOMIC DNA]</scope>
    <source>
        <strain>ATCC BAA-895 / CDC 4225-83 / SGSC4696</strain>
    </source>
</reference>
<dbReference type="EC" id="1.1.1.130" evidence="1"/>
<dbReference type="EMBL" id="CP000822">
    <property type="protein sequence ID" value="ABV16076.1"/>
    <property type="molecule type" value="Genomic_DNA"/>
</dbReference>
<dbReference type="RefSeq" id="WP_012135714.1">
    <property type="nucleotide sequence ID" value="NC_009792.1"/>
</dbReference>
<dbReference type="SMR" id="A8ARG3"/>
<dbReference type="STRING" id="290338.CKO_05033"/>
<dbReference type="GeneID" id="45138495"/>
<dbReference type="KEGG" id="cko:CKO_05033"/>
<dbReference type="HOGENOM" id="CLU_040452_4_0_6"/>
<dbReference type="OrthoDB" id="9811519at2"/>
<dbReference type="Proteomes" id="UP000008148">
    <property type="component" value="Chromosome"/>
</dbReference>
<dbReference type="GO" id="GO:0005737">
    <property type="term" value="C:cytoplasm"/>
    <property type="evidence" value="ECO:0007669"/>
    <property type="project" value="UniProtKB-SubCell"/>
</dbReference>
<dbReference type="GO" id="GO:0047559">
    <property type="term" value="F:3-dehydro-L-gulonate 2-dehydrogenase activity"/>
    <property type="evidence" value="ECO:0007669"/>
    <property type="project" value="UniProtKB-UniRule"/>
</dbReference>
<dbReference type="GO" id="GO:0070403">
    <property type="term" value="F:NAD+ binding"/>
    <property type="evidence" value="ECO:0007669"/>
    <property type="project" value="InterPro"/>
</dbReference>
<dbReference type="Gene3D" id="1.10.1530.10">
    <property type="match status" value="1"/>
</dbReference>
<dbReference type="Gene3D" id="3.30.1370.60">
    <property type="entry name" value="Hypothetical oxidoreductase yiak, domain 2"/>
    <property type="match status" value="1"/>
</dbReference>
<dbReference type="Gene3D" id="3.30.60.50">
    <property type="entry name" value="Hypothetical oxidoreductase yiak, domain 3"/>
    <property type="match status" value="1"/>
</dbReference>
<dbReference type="HAMAP" id="MF_00820">
    <property type="entry name" value="Diketo_gul_reduc"/>
    <property type="match status" value="1"/>
</dbReference>
<dbReference type="InterPro" id="IPR023689">
    <property type="entry name" value="Diketo_gul_Rdtase"/>
</dbReference>
<dbReference type="InterPro" id="IPR043144">
    <property type="entry name" value="Mal/L-sulf/L-lact_DH-like_ah"/>
</dbReference>
<dbReference type="InterPro" id="IPR043143">
    <property type="entry name" value="Mal/L-sulf/L-lact_DH-like_NADP"/>
</dbReference>
<dbReference type="InterPro" id="IPR036111">
    <property type="entry name" value="Mal/L-sulfo/L-lacto_DH-like_sf"/>
</dbReference>
<dbReference type="InterPro" id="IPR003767">
    <property type="entry name" value="Malate/L-lactate_DH-like"/>
</dbReference>
<dbReference type="NCBIfam" id="NF009750">
    <property type="entry name" value="PRK13260.1"/>
    <property type="match status" value="1"/>
</dbReference>
<dbReference type="PANTHER" id="PTHR11091:SF3">
    <property type="entry name" value="2,3-DIKETO-L-GULONATE REDUCTASE"/>
    <property type="match status" value="1"/>
</dbReference>
<dbReference type="PANTHER" id="PTHR11091">
    <property type="entry name" value="OXIDOREDUCTASE-RELATED"/>
    <property type="match status" value="1"/>
</dbReference>
<dbReference type="Pfam" id="PF02615">
    <property type="entry name" value="Ldh_2"/>
    <property type="match status" value="1"/>
</dbReference>
<dbReference type="SUPFAM" id="SSF89733">
    <property type="entry name" value="L-sulfolactate dehydrogenase-like"/>
    <property type="match status" value="1"/>
</dbReference>
<feature type="chain" id="PRO_1000062438" description="2,3-diketo-L-gulonate reductase">
    <location>
        <begin position="1"/>
        <end position="332"/>
    </location>
</feature>
<feature type="active site" description="Proton donor" evidence="1">
    <location>
        <position position="44"/>
    </location>
</feature>
<feature type="binding site" evidence="1">
    <location>
        <begin position="168"/>
        <end position="174"/>
    </location>
    <ligand>
        <name>NAD(+)</name>
        <dbReference type="ChEBI" id="CHEBI:57540"/>
    </ligand>
</feature>
<feature type="binding site" evidence="1">
    <location>
        <begin position="224"/>
        <end position="225"/>
    </location>
    <ligand>
        <name>NAD(+)</name>
        <dbReference type="ChEBI" id="CHEBI:57540"/>
    </ligand>
</feature>
<feature type="binding site" evidence="1">
    <location>
        <begin position="304"/>
        <end position="306"/>
    </location>
    <ligand>
        <name>NAD(+)</name>
        <dbReference type="ChEBI" id="CHEBI:57540"/>
    </ligand>
</feature>
<evidence type="ECO:0000255" key="1">
    <source>
        <dbReference type="HAMAP-Rule" id="MF_00820"/>
    </source>
</evidence>
<sequence>MKVTFEQLKEAFNRVLLARGVAAETADACAEMFARTTESGVYSHGVNRFPRFIQQLDNGDIIPDARPQRITSLGAIEQWDAQRAIGNLTAKKMMDRAIELASDHGIGLVALRNANHWMRGGSYGWQAAEKGYIGICWTNSIAVMPPWGSKECRIGTNPLIVAIPSSPITMIDMSMSMFSYGMLEVNRLAGRELPVDGGFDDEGNLTKEPGVIEKNRRILPMGYWKGSGLSIVLDMIATLLSDGASVAEVTQENSDEYGVSQIFIAIEVDKLIDGATRDAKLQRIMDFVTTAERADENVAIRLPGHEFTRLRDENRRNGITVDDSVWAKIQAL</sequence>